<name>Y5654_PSEF5</name>
<proteinExistence type="inferred from homology"/>
<dbReference type="EMBL" id="CP000076">
    <property type="protein sequence ID" value="AAY94847.1"/>
    <property type="molecule type" value="Genomic_DNA"/>
</dbReference>
<dbReference type="RefSeq" id="WP_011063832.1">
    <property type="nucleotide sequence ID" value="NC_004129.6"/>
</dbReference>
<dbReference type="SMR" id="Q4K4X0"/>
<dbReference type="STRING" id="220664.PFL_5654"/>
<dbReference type="KEGG" id="pfl:PFL_5654"/>
<dbReference type="PATRIC" id="fig|220664.5.peg.5766"/>
<dbReference type="eggNOG" id="COG2718">
    <property type="taxonomic scope" value="Bacteria"/>
</dbReference>
<dbReference type="HOGENOM" id="CLU_049702_0_0_6"/>
<dbReference type="Proteomes" id="UP000008540">
    <property type="component" value="Chromosome"/>
</dbReference>
<dbReference type="HAMAP" id="MF_01232">
    <property type="entry name" value="UPF0229"/>
    <property type="match status" value="1"/>
</dbReference>
<dbReference type="InterPro" id="IPR006698">
    <property type="entry name" value="UPF0229"/>
</dbReference>
<dbReference type="InterPro" id="IPR036465">
    <property type="entry name" value="vWFA_dom_sf"/>
</dbReference>
<dbReference type="NCBIfam" id="NF003707">
    <property type="entry name" value="PRK05325.1-2"/>
    <property type="match status" value="1"/>
</dbReference>
<dbReference type="NCBIfam" id="NF003708">
    <property type="entry name" value="PRK05325.1-3"/>
    <property type="match status" value="1"/>
</dbReference>
<dbReference type="PANTHER" id="PTHR30510">
    <property type="entry name" value="UPF0229 PROTEIN YEAH"/>
    <property type="match status" value="1"/>
</dbReference>
<dbReference type="PANTHER" id="PTHR30510:SF2">
    <property type="entry name" value="UPF0229 PROTEIN YEAH"/>
    <property type="match status" value="1"/>
</dbReference>
<dbReference type="Pfam" id="PF04285">
    <property type="entry name" value="DUF444"/>
    <property type="match status" value="1"/>
</dbReference>
<dbReference type="SUPFAM" id="SSF53300">
    <property type="entry name" value="vWA-like"/>
    <property type="match status" value="1"/>
</dbReference>
<reference key="1">
    <citation type="journal article" date="2005" name="Nat. Biotechnol.">
        <title>Complete genome sequence of the plant commensal Pseudomonas fluorescens Pf-5.</title>
        <authorList>
            <person name="Paulsen I.T."/>
            <person name="Press C.M."/>
            <person name="Ravel J."/>
            <person name="Kobayashi D.Y."/>
            <person name="Myers G.S.A."/>
            <person name="Mavrodi D.V."/>
            <person name="DeBoy R.T."/>
            <person name="Seshadri R."/>
            <person name="Ren Q."/>
            <person name="Madupu R."/>
            <person name="Dodson R.J."/>
            <person name="Durkin A.S."/>
            <person name="Brinkac L.M."/>
            <person name="Daugherty S.C."/>
            <person name="Sullivan S.A."/>
            <person name="Rosovitz M.J."/>
            <person name="Gwinn M.L."/>
            <person name="Zhou L."/>
            <person name="Schneider D.J."/>
            <person name="Cartinhour S.W."/>
            <person name="Nelson W.C."/>
            <person name="Weidman J."/>
            <person name="Watkins K."/>
            <person name="Tran K."/>
            <person name="Khouri H."/>
            <person name="Pierson E.A."/>
            <person name="Pierson L.S. III"/>
            <person name="Thomashow L.S."/>
            <person name="Loper J.E."/>
        </authorList>
    </citation>
    <scope>NUCLEOTIDE SEQUENCE [LARGE SCALE GENOMIC DNA]</scope>
    <source>
        <strain>ATCC BAA-477 / NRRL B-23932 / Pf-5</strain>
    </source>
</reference>
<evidence type="ECO:0000255" key="1">
    <source>
        <dbReference type="HAMAP-Rule" id="MF_01232"/>
    </source>
</evidence>
<evidence type="ECO:0000256" key="2">
    <source>
        <dbReference type="SAM" id="MobiDB-lite"/>
    </source>
</evidence>
<organism>
    <name type="scientific">Pseudomonas fluorescens (strain ATCC BAA-477 / NRRL B-23932 / Pf-5)</name>
    <dbReference type="NCBI Taxonomy" id="220664"/>
    <lineage>
        <taxon>Bacteria</taxon>
        <taxon>Pseudomonadati</taxon>
        <taxon>Pseudomonadota</taxon>
        <taxon>Gammaproteobacteria</taxon>
        <taxon>Pseudomonadales</taxon>
        <taxon>Pseudomonadaceae</taxon>
        <taxon>Pseudomonas</taxon>
    </lineage>
</organism>
<gene>
    <name type="ordered locus">PFL_5654</name>
</gene>
<accession>Q4K4X0</accession>
<sequence>MSYVIDRRLNGKNKSTVNRQRFLRRYRDHIKKAVEEAVSRRSITDMEHGEQISIPGRDIDEPVLHHGRGGKQTVVHPGNKEFTAGEHIARPQGGGGGGGGRGKAGNSGEGMDEFVFQITQEEFLEFMFEDLELPNLVKRNLTGTDTFKTVRAGISNEGNPARINIIRTLRSAHARRIALSGSSRAKLREAKEELARLKREEPDNFGDIQELEAEIERLSARIHRVPFLDTFDLKYNLLVKQPNPSSKAVMFCLMDVSGSMTQATKDIAKRFFILLYLFLKRNYDKIDVVFIRHHTSAREVDEEEFFYSRETGGTIVSSALKLMQEIMAERYPSNEWNIYAAQASDGDNWNDDSPICRDILINQIMPFVQYYTYVEITPREHQALWFEYERIAEAFSDTFAQQQLVSAGDIYPVFRELFQRRLVT</sequence>
<protein>
    <recommendedName>
        <fullName evidence="1">UPF0229 protein PFL_5654</fullName>
    </recommendedName>
</protein>
<comment type="similarity">
    <text evidence="1">Belongs to the UPF0229 family.</text>
</comment>
<feature type="chain" id="PRO_1000066871" description="UPF0229 protein PFL_5654">
    <location>
        <begin position="1"/>
        <end position="424"/>
    </location>
</feature>
<feature type="region of interest" description="Disordered" evidence="2">
    <location>
        <begin position="85"/>
        <end position="108"/>
    </location>
</feature>
<feature type="compositionally biased region" description="Gly residues" evidence="2">
    <location>
        <begin position="92"/>
        <end position="108"/>
    </location>
</feature>